<keyword id="KW-0249">Electron transport</keyword>
<keyword id="KW-0472">Membrane</keyword>
<keyword id="KW-0496">Mitochondrion</keyword>
<keyword id="KW-0999">Mitochondrion inner membrane</keyword>
<keyword id="KW-0520">NAD</keyword>
<keyword id="KW-1185">Reference proteome</keyword>
<keyword id="KW-0679">Respiratory chain</keyword>
<keyword id="KW-1278">Translocase</keyword>
<keyword id="KW-0812">Transmembrane</keyword>
<keyword id="KW-1133">Transmembrane helix</keyword>
<keyword id="KW-0813">Transport</keyword>
<keyword id="KW-0830">Ubiquinone</keyword>
<comment type="function">
    <text evidence="1">Core subunit of the mitochondrial membrane respiratory chain NADH dehydrogenase (Complex I) that is believed to belong to the minimal assembly required for catalysis. Complex I functions in the transfer of electrons from NADH to the respiratory chain. The immediate electron acceptor for the enzyme is believed to be ubiquinone (By similarity).</text>
</comment>
<comment type="catalytic activity">
    <reaction>
        <text>a ubiquinone + NADH + 5 H(+)(in) = a ubiquinol + NAD(+) + 4 H(+)(out)</text>
        <dbReference type="Rhea" id="RHEA:29091"/>
        <dbReference type="Rhea" id="RHEA-COMP:9565"/>
        <dbReference type="Rhea" id="RHEA-COMP:9566"/>
        <dbReference type="ChEBI" id="CHEBI:15378"/>
        <dbReference type="ChEBI" id="CHEBI:16389"/>
        <dbReference type="ChEBI" id="CHEBI:17976"/>
        <dbReference type="ChEBI" id="CHEBI:57540"/>
        <dbReference type="ChEBI" id="CHEBI:57945"/>
        <dbReference type="EC" id="7.1.1.2"/>
    </reaction>
</comment>
<comment type="subcellular location">
    <subcellularLocation>
        <location evidence="1">Mitochondrion inner membrane</location>
        <topology evidence="1">Multi-pass membrane protein</topology>
    </subcellularLocation>
</comment>
<comment type="similarity">
    <text evidence="3">Belongs to the complex I subunit 1 family.</text>
</comment>
<geneLocation type="mitochondrion"/>
<dbReference type="EC" id="7.1.1.2"/>
<dbReference type="EMBL" id="AB079800">
    <property type="protein sequence ID" value="BAB92026.1"/>
    <property type="molecule type" value="Genomic_DNA"/>
</dbReference>
<dbReference type="SMR" id="Q8M899"/>
<dbReference type="Proteomes" id="UP000515202">
    <property type="component" value="Unplaced"/>
</dbReference>
<dbReference type="GO" id="GO:0005743">
    <property type="term" value="C:mitochondrial inner membrane"/>
    <property type="evidence" value="ECO:0007669"/>
    <property type="project" value="UniProtKB-SubCell"/>
</dbReference>
<dbReference type="GO" id="GO:0008137">
    <property type="term" value="F:NADH dehydrogenase (ubiquinone) activity"/>
    <property type="evidence" value="ECO:0007669"/>
    <property type="project" value="UniProtKB-EC"/>
</dbReference>
<dbReference type="GO" id="GO:0009060">
    <property type="term" value="P:aerobic respiration"/>
    <property type="evidence" value="ECO:0007669"/>
    <property type="project" value="TreeGrafter"/>
</dbReference>
<dbReference type="HAMAP" id="MF_01350">
    <property type="entry name" value="NDH1_NuoH"/>
    <property type="match status" value="1"/>
</dbReference>
<dbReference type="InterPro" id="IPR001694">
    <property type="entry name" value="NADH_UbQ_OxRdtase_su1/FPO"/>
</dbReference>
<dbReference type="InterPro" id="IPR018086">
    <property type="entry name" value="NADH_UbQ_OxRdtase_su1_CS"/>
</dbReference>
<dbReference type="PANTHER" id="PTHR11432">
    <property type="entry name" value="NADH DEHYDROGENASE SUBUNIT 1"/>
    <property type="match status" value="1"/>
</dbReference>
<dbReference type="PANTHER" id="PTHR11432:SF3">
    <property type="entry name" value="NADH-UBIQUINONE OXIDOREDUCTASE CHAIN 1"/>
    <property type="match status" value="1"/>
</dbReference>
<dbReference type="Pfam" id="PF00146">
    <property type="entry name" value="NADHdh"/>
    <property type="match status" value="1"/>
</dbReference>
<dbReference type="PROSITE" id="PS00667">
    <property type="entry name" value="COMPLEX1_ND1_1"/>
    <property type="match status" value="1"/>
</dbReference>
<dbReference type="PROSITE" id="PS00668">
    <property type="entry name" value="COMPLEX1_ND1_2"/>
    <property type="match status" value="1"/>
</dbReference>
<gene>
    <name type="primary">MT-ND1</name>
    <name type="synonym">MTND1</name>
    <name type="synonym">NADH1</name>
    <name type="synonym">ND1</name>
</gene>
<feature type="chain" id="PRO_0000117465" description="NADH-ubiquinone oxidoreductase chain 1">
    <location>
        <begin position="1"/>
        <end position="318"/>
    </location>
</feature>
<feature type="transmembrane region" description="Helical" evidence="2">
    <location>
        <begin position="3"/>
        <end position="23"/>
    </location>
</feature>
<feature type="transmembrane region" description="Helical" evidence="2">
    <location>
        <begin position="70"/>
        <end position="90"/>
    </location>
</feature>
<feature type="transmembrane region" description="Helical" evidence="2">
    <location>
        <begin position="100"/>
        <end position="120"/>
    </location>
</feature>
<feature type="transmembrane region" description="Helical" evidence="2">
    <location>
        <begin position="146"/>
        <end position="166"/>
    </location>
</feature>
<feature type="transmembrane region" description="Helical" evidence="2">
    <location>
        <begin position="171"/>
        <end position="191"/>
    </location>
</feature>
<feature type="transmembrane region" description="Helical" evidence="2">
    <location>
        <begin position="222"/>
        <end position="242"/>
    </location>
</feature>
<feature type="transmembrane region" description="Helical" evidence="2">
    <location>
        <begin position="253"/>
        <end position="273"/>
    </location>
</feature>
<feature type="transmembrane region" description="Helical" evidence="2">
    <location>
        <begin position="294"/>
        <end position="314"/>
    </location>
</feature>
<name>NU1M_PTEVA</name>
<accession>Q8M899</accession>
<protein>
    <recommendedName>
        <fullName>NADH-ubiquinone oxidoreductase chain 1</fullName>
        <ecNumber>7.1.1.2</ecNumber>
    </recommendedName>
    <alternativeName>
        <fullName>NADH dehydrogenase subunit 1</fullName>
    </alternativeName>
</protein>
<organism>
    <name type="scientific">Pteropus vampyrus</name>
    <name type="common">Large flying fox</name>
    <dbReference type="NCBI Taxonomy" id="132908"/>
    <lineage>
        <taxon>Eukaryota</taxon>
        <taxon>Metazoa</taxon>
        <taxon>Chordata</taxon>
        <taxon>Craniata</taxon>
        <taxon>Vertebrata</taxon>
        <taxon>Euteleostomi</taxon>
        <taxon>Mammalia</taxon>
        <taxon>Eutheria</taxon>
        <taxon>Laurasiatheria</taxon>
        <taxon>Chiroptera</taxon>
        <taxon>Yinpterochiroptera</taxon>
        <taxon>Pteropodoidea</taxon>
        <taxon>Pteropodidae</taxon>
        <taxon>Pteropodinae</taxon>
        <taxon>Pteropus</taxon>
    </lineage>
</organism>
<evidence type="ECO:0000250" key="1"/>
<evidence type="ECO:0000255" key="2"/>
<evidence type="ECO:0000305" key="3"/>
<reference key="1">
    <citation type="journal article" date="2002" name="J. Mol. Evol.">
        <title>Intra- and interfamily relationships of Vespertilionidae inferred by various molecular markers including SINE insertion data.</title>
        <authorList>
            <person name="Kawai K."/>
            <person name="Nikaido M."/>
            <person name="Harada M."/>
            <person name="Matsumura S."/>
            <person name="Lin L.K."/>
            <person name="Wu Y."/>
            <person name="Hasegawa M."/>
            <person name="Okada N."/>
        </authorList>
    </citation>
    <scope>NUCLEOTIDE SEQUENCE [GENOMIC DNA]</scope>
</reference>
<proteinExistence type="inferred from homology"/>
<sequence length="318" mass="35661">MFMVNLLTMIVPILLAVAFLTLIERKVLGYMQLRKGPNVVGPYGLLQPMADALKLFIKEPLRPLTSSPSMFIIAPILALTLALTMWIPLPMPHPLINMNLAVLFMLAMSSLAVYSILWSGWASNSKYALIGAMRAVAQTISYEVTLAIILLSVLLLSGSFSLSTLITTQEHTWLMLSSWPLAMMWFISTLAETNRAPFDLTEGESELVSGFNVEYAGGPFALFFMAEYANIIMMNTLTAILFTGAFHNPLMPELYTINLIIKALLLTVFFLWIRASYPRFRYDQLMHLLWKNFLPLTLALCMWHVAMPITMAGIPPQT</sequence>